<keyword id="KW-0002">3D-structure</keyword>
<keyword id="KW-0007">Acetylation</keyword>
<keyword id="KW-1003">Cell membrane</keyword>
<keyword id="KW-0966">Cell projection</keyword>
<keyword id="KW-0963">Cytoplasm</keyword>
<keyword id="KW-0472">Membrane</keyword>
<keyword id="KW-0539">Nucleus</keyword>
<keyword id="KW-0597">Phosphoprotein</keyword>
<keyword id="KW-1185">Reference proteome</keyword>
<keyword id="KW-0677">Repeat</keyword>
<keyword id="KW-0687">Ribonucleoprotein</keyword>
<keyword id="KW-0689">Ribosomal protein</keyword>
<keyword id="KW-0853">WD repeat</keyword>
<reference key="1">
    <citation type="journal article" date="1989" name="Proc. Natl. Acad. Sci. U.S.A.">
        <title>Physical linkage of a guanine nucleotide-binding protein-related gene to the chicken major histocompatibility complex.</title>
        <authorList>
            <person name="Guillemot F."/>
            <person name="Billault A."/>
            <person name="Auffray C."/>
        </authorList>
    </citation>
    <scope>NUCLEOTIDE SEQUENCE [MRNA]</scope>
    <source>
        <tissue>Liver</tissue>
    </source>
</reference>
<reference key="2">
    <citation type="journal article" date="2004" name="Mol. Biol. Evol.">
        <title>The phylogenetic relationship of tetrapod, coelacanth, and lungfish revealed by the sequences of forty-four nuclear genes.</title>
        <authorList>
            <person name="Takezaki N."/>
            <person name="Figueroa F."/>
            <person name="Zaleska-Rutczynska Z."/>
            <person name="Takahata N."/>
            <person name="Klein J."/>
        </authorList>
    </citation>
    <scope>NUCLEOTIDE SEQUENCE [MRNA]</scope>
    <source>
        <tissue>Liver</tissue>
    </source>
</reference>
<reference key="3">
    <citation type="journal article" date="2005" name="Immunogenetics">
        <title>Characterisation of a cluster of TRIM-B30.2 genes in the chicken MHC B locus.</title>
        <authorList>
            <person name="Ruby T."/>
            <person name="Bed'Hom B."/>
            <person name="Wittzell H."/>
            <person name="Morin V."/>
            <person name="Oudin A."/>
            <person name="Zoorob R."/>
        </authorList>
    </citation>
    <scope>NUCLEOTIDE SEQUENCE [GENOMIC DNA]</scope>
</reference>
<reference key="4">
    <citation type="journal article" date="2007" name="J. Immunol.">
        <title>Extended gene map reveals tripartite motif, C-type lectin, and Ig superfamily type genes within a subregion of the chicken MHC-B affecting infectious disease.</title>
        <authorList>
            <person name="Shiina T."/>
            <person name="Briles W.E."/>
            <person name="Goto R.M."/>
            <person name="Hosomichi K."/>
            <person name="Yanagiya K."/>
            <person name="Shimizu S."/>
            <person name="Inoko H."/>
            <person name="Miller M.M."/>
        </authorList>
    </citation>
    <scope>NUCLEOTIDE SEQUENCE [GENOMIC DNA]</scope>
</reference>
<sequence>MTEQMTLRGTLKGHNGWVTQIATTPQFPDMILSASRDKTIIMWKLTRDETNYGIPQRALRGHSHFVSDVVISSDGQFALSGSWDGTLRLWDLTTGTTTRRFVGHTKDVLSVAFSSDNRQIVSGSRDKTIKLWNTLGVCKYTVQDESHSEWVSCVRFSPNSSNPIIVSCGWDKLVKVWNLANCKLKTNHIGHTGYLNTVTVSPDGSLCASGGKDGQAMLWDLNEGKHLYTLDGGDIINALCFSPNRYWLCAATGPSIKIWDLEGKIIVDELKQEVISTSSKAEPPQCTSLAWSADGQTLFAGYTDNLVRVWQVTIGTR</sequence>
<dbReference type="EMBL" id="M24193">
    <property type="protein sequence ID" value="AAA50559.1"/>
    <property type="molecule type" value="mRNA"/>
</dbReference>
<dbReference type="EMBL" id="AY393848">
    <property type="protein sequence ID" value="AAS49613.1"/>
    <property type="molecule type" value="mRNA"/>
</dbReference>
<dbReference type="EMBL" id="AY694127">
    <property type="protein sequence ID" value="AAW82329.1"/>
    <property type="molecule type" value="Genomic_DNA"/>
</dbReference>
<dbReference type="EMBL" id="AB268588">
    <property type="protein sequence ID" value="BAF62990.1"/>
    <property type="molecule type" value="Genomic_DNA"/>
</dbReference>
<dbReference type="PIR" id="A33928">
    <property type="entry name" value="A33928"/>
</dbReference>
<dbReference type="RefSeq" id="NP_001004378.1">
    <property type="nucleotide sequence ID" value="NM_001004378.3"/>
</dbReference>
<dbReference type="PDB" id="8Q7Z">
    <property type="method" value="EM"/>
    <property type="resolution" value="2.50 A"/>
    <property type="chains" value="AF=1-317"/>
</dbReference>
<dbReference type="PDB" id="8Q87">
    <property type="method" value="EM"/>
    <property type="resolution" value="2.40 A"/>
    <property type="chains" value="AF=1-317"/>
</dbReference>
<dbReference type="PDBsum" id="8Q7Z"/>
<dbReference type="PDBsum" id="8Q87"/>
<dbReference type="SMR" id="P63247"/>
<dbReference type="BioGRID" id="678470">
    <property type="interactions" value="1"/>
</dbReference>
<dbReference type="FunCoup" id="P63247">
    <property type="interactions" value="2617"/>
</dbReference>
<dbReference type="STRING" id="9031.ENSGALP00000000170"/>
<dbReference type="PaxDb" id="9031-ENSGALP00000000170"/>
<dbReference type="GeneID" id="417044"/>
<dbReference type="KEGG" id="gga:417044"/>
<dbReference type="CTD" id="10399"/>
<dbReference type="VEuPathDB" id="HostDB:geneid_417044"/>
<dbReference type="eggNOG" id="KOG0279">
    <property type="taxonomic scope" value="Eukaryota"/>
</dbReference>
<dbReference type="HOGENOM" id="CLU_000288_57_7_1"/>
<dbReference type="InParanoid" id="P63247"/>
<dbReference type="OMA" id="NCKLKIN"/>
<dbReference type="OrthoDB" id="7875889at2759"/>
<dbReference type="PhylomeDB" id="P63247"/>
<dbReference type="Reactome" id="R-GGA-5626978">
    <property type="pathway name" value="TNFR1-mediated ceramide production"/>
</dbReference>
<dbReference type="PRO" id="PR:P63247"/>
<dbReference type="Proteomes" id="UP000000539">
    <property type="component" value="Chromosome 16"/>
</dbReference>
<dbReference type="Bgee" id="ENSGALG00000000122">
    <property type="expression patterns" value="Expressed in granulocyte and 12 other cell types or tissues"/>
</dbReference>
<dbReference type="GO" id="GO:0005737">
    <property type="term" value="C:cytoplasm"/>
    <property type="evidence" value="ECO:0000250"/>
    <property type="project" value="UniProtKB"/>
</dbReference>
<dbReference type="GO" id="GO:0005829">
    <property type="term" value="C:cytosol"/>
    <property type="evidence" value="ECO:0000318"/>
    <property type="project" value="GO_Central"/>
</dbReference>
<dbReference type="GO" id="GO:0030425">
    <property type="term" value="C:dendrite"/>
    <property type="evidence" value="ECO:0007669"/>
    <property type="project" value="UniProtKB-SubCell"/>
</dbReference>
<dbReference type="GO" id="GO:0043025">
    <property type="term" value="C:neuronal cell body"/>
    <property type="evidence" value="ECO:0000250"/>
    <property type="project" value="UniProtKB"/>
</dbReference>
<dbReference type="GO" id="GO:0005634">
    <property type="term" value="C:nucleus"/>
    <property type="evidence" value="ECO:0000318"/>
    <property type="project" value="GO_Central"/>
</dbReference>
<dbReference type="GO" id="GO:0043204">
    <property type="term" value="C:perikaryon"/>
    <property type="evidence" value="ECO:0007669"/>
    <property type="project" value="UniProtKB-SubCell"/>
</dbReference>
<dbReference type="GO" id="GO:0048471">
    <property type="term" value="C:perinuclear region of cytoplasm"/>
    <property type="evidence" value="ECO:0007669"/>
    <property type="project" value="UniProtKB-SubCell"/>
</dbReference>
<dbReference type="GO" id="GO:0005886">
    <property type="term" value="C:plasma membrane"/>
    <property type="evidence" value="ECO:0007669"/>
    <property type="project" value="UniProtKB-SubCell"/>
</dbReference>
<dbReference type="GO" id="GO:1990904">
    <property type="term" value="C:ribonucleoprotein complex"/>
    <property type="evidence" value="ECO:0007669"/>
    <property type="project" value="UniProtKB-KW"/>
</dbReference>
<dbReference type="GO" id="GO:0005840">
    <property type="term" value="C:ribosome"/>
    <property type="evidence" value="ECO:0007669"/>
    <property type="project" value="UniProtKB-KW"/>
</dbReference>
<dbReference type="GO" id="GO:0005080">
    <property type="term" value="F:protein kinase C binding"/>
    <property type="evidence" value="ECO:0000318"/>
    <property type="project" value="GO_Central"/>
</dbReference>
<dbReference type="GO" id="GO:0043022">
    <property type="term" value="F:ribosome binding"/>
    <property type="evidence" value="ECO:0000250"/>
    <property type="project" value="UniProtKB"/>
</dbReference>
<dbReference type="GO" id="GO:0045182">
    <property type="term" value="F:translation regulator activity"/>
    <property type="evidence" value="ECO:0007669"/>
    <property type="project" value="InterPro"/>
</dbReference>
<dbReference type="GO" id="GO:2001125">
    <property type="term" value="P:negative regulation of translational frameshifting"/>
    <property type="evidence" value="ECO:0000318"/>
    <property type="project" value="GO_Central"/>
</dbReference>
<dbReference type="GO" id="GO:0030178">
    <property type="term" value="P:negative regulation of Wnt signaling pathway"/>
    <property type="evidence" value="ECO:0000250"/>
    <property type="project" value="UniProtKB"/>
</dbReference>
<dbReference type="GO" id="GO:2000543">
    <property type="term" value="P:positive regulation of gastrulation"/>
    <property type="evidence" value="ECO:0000250"/>
    <property type="project" value="UniProtKB"/>
</dbReference>
<dbReference type="GO" id="GO:0016567">
    <property type="term" value="P:protein ubiquitination"/>
    <property type="evidence" value="ECO:0000250"/>
    <property type="project" value="UniProtKB"/>
</dbReference>
<dbReference type="GO" id="GO:0051302">
    <property type="term" value="P:regulation of cell division"/>
    <property type="evidence" value="ECO:0000250"/>
    <property type="project" value="UniProtKB"/>
</dbReference>
<dbReference type="GO" id="GO:2000114">
    <property type="term" value="P:regulation of establishment of cell polarity"/>
    <property type="evidence" value="ECO:0000250"/>
    <property type="project" value="UniProtKB"/>
</dbReference>
<dbReference type="GO" id="GO:0032880">
    <property type="term" value="P:regulation of protein localization"/>
    <property type="evidence" value="ECO:0000250"/>
    <property type="project" value="UniProtKB"/>
</dbReference>
<dbReference type="GO" id="GO:0072344">
    <property type="term" value="P:rescue of stalled ribosome"/>
    <property type="evidence" value="ECO:0000250"/>
    <property type="project" value="UniProtKB"/>
</dbReference>
<dbReference type="GO" id="GO:0007165">
    <property type="term" value="P:signal transduction"/>
    <property type="evidence" value="ECO:0000304"/>
    <property type="project" value="UniProtKB"/>
</dbReference>
<dbReference type="CDD" id="cd00200">
    <property type="entry name" value="WD40"/>
    <property type="match status" value="1"/>
</dbReference>
<dbReference type="FunFam" id="2.130.10.10:FF:001252">
    <property type="entry name" value="Receptor of activated protein C kinase 1"/>
    <property type="match status" value="1"/>
</dbReference>
<dbReference type="Gene3D" id="2.130.10.10">
    <property type="entry name" value="YVTN repeat-like/Quinoprotein amine dehydrogenase"/>
    <property type="match status" value="1"/>
</dbReference>
<dbReference type="InterPro" id="IPR020472">
    <property type="entry name" value="G-protein_beta_WD-40_rep"/>
</dbReference>
<dbReference type="InterPro" id="IPR045223">
    <property type="entry name" value="RACK1-like"/>
</dbReference>
<dbReference type="InterPro" id="IPR015943">
    <property type="entry name" value="WD40/YVTN_repeat-like_dom_sf"/>
</dbReference>
<dbReference type="InterPro" id="IPR019775">
    <property type="entry name" value="WD40_repeat_CS"/>
</dbReference>
<dbReference type="InterPro" id="IPR036322">
    <property type="entry name" value="WD40_repeat_dom_sf"/>
</dbReference>
<dbReference type="InterPro" id="IPR001680">
    <property type="entry name" value="WD40_rpt"/>
</dbReference>
<dbReference type="PANTHER" id="PTHR19868">
    <property type="entry name" value="RECEPTOR FOR ACTIVATED PROTEIN KINASE C RACK1"/>
    <property type="match status" value="1"/>
</dbReference>
<dbReference type="Pfam" id="PF00400">
    <property type="entry name" value="WD40"/>
    <property type="match status" value="7"/>
</dbReference>
<dbReference type="PRINTS" id="PR00320">
    <property type="entry name" value="GPROTEINBRPT"/>
</dbReference>
<dbReference type="SMART" id="SM00320">
    <property type="entry name" value="WD40"/>
    <property type="match status" value="7"/>
</dbReference>
<dbReference type="SUPFAM" id="SSF50978">
    <property type="entry name" value="WD40 repeat-like"/>
    <property type="match status" value="1"/>
</dbReference>
<dbReference type="PROSITE" id="PS00678">
    <property type="entry name" value="WD_REPEATS_1"/>
    <property type="match status" value="4"/>
</dbReference>
<dbReference type="PROSITE" id="PS50082">
    <property type="entry name" value="WD_REPEATS_2"/>
    <property type="match status" value="6"/>
</dbReference>
<dbReference type="PROSITE" id="PS50294">
    <property type="entry name" value="WD_REPEATS_REGION"/>
    <property type="match status" value="1"/>
</dbReference>
<accession>P63247</accession>
<accession>A5HUK6</accession>
<accession>P25388</accession>
<accession>P99049</accession>
<accession>Q5EVY1</accession>
<protein>
    <recommendedName>
        <fullName evidence="4">Small ribosomal subunit protein RACK1</fullName>
    </recommendedName>
    <alternativeName>
        <fullName>Guanine nucleotide-binding protein subunit beta-like protein 12.3</fullName>
    </alternativeName>
    <alternativeName>
        <fullName>Receptor for activated C kinase</fullName>
    </alternativeName>
    <alternativeName>
        <fullName>Receptor of activated protein C kinase 1</fullName>
    </alternativeName>
    <alternativeName>
        <fullName>Receptor of activated protein kinase C 1</fullName>
        <shortName>RACK1</shortName>
    </alternativeName>
</protein>
<feature type="initiator methionine" description="Removed" evidence="1">
    <location>
        <position position="1"/>
    </location>
</feature>
<feature type="chain" id="PRO_0000127735" description="Small ribosomal subunit protein RACK1">
    <location>
        <begin position="2"/>
        <end position="317"/>
    </location>
</feature>
<feature type="repeat" description="WD 1">
    <location>
        <begin position="13"/>
        <end position="44"/>
    </location>
</feature>
<feature type="repeat" description="WD 2">
    <location>
        <begin position="61"/>
        <end position="91"/>
    </location>
</feature>
<feature type="repeat" description="WD 3">
    <location>
        <begin position="103"/>
        <end position="133"/>
    </location>
</feature>
<feature type="repeat" description="WD 4">
    <location>
        <begin position="146"/>
        <end position="178"/>
    </location>
</feature>
<feature type="repeat" description="WD 5">
    <location>
        <begin position="190"/>
        <end position="220"/>
    </location>
</feature>
<feature type="repeat" description="WD 6">
    <location>
        <begin position="231"/>
        <end position="260"/>
    </location>
</feature>
<feature type="repeat" description="WD 7">
    <location>
        <begin position="281"/>
        <end position="311"/>
    </location>
</feature>
<feature type="modified residue" description="N-acetylthreonine" evidence="1">
    <location>
        <position position="2"/>
    </location>
</feature>
<feature type="modified residue" description="Phosphotyrosine" evidence="1">
    <location>
        <position position="228"/>
    </location>
</feature>
<evidence type="ECO:0000250" key="1"/>
<evidence type="ECO:0000250" key="2">
    <source>
        <dbReference type="UniProtKB" id="P63244"/>
    </source>
</evidence>
<evidence type="ECO:0000250" key="3">
    <source>
        <dbReference type="UniProtKB" id="P68040"/>
    </source>
</evidence>
<evidence type="ECO:0000305" key="4"/>
<comment type="function">
    <text evidence="2">Involved in the recruitment, assembly and/or regulation of a variety of signaling molecules. Interacts with a wide variety of proteins and plays a role in many cellular processes (By similarity).</text>
</comment>
<comment type="subcellular location">
    <subcellularLocation>
        <location evidence="2">Cell membrane</location>
        <topology evidence="2">Peripheral membrane protein</topology>
    </subcellularLocation>
    <subcellularLocation>
        <location evidence="2">Cytoplasm</location>
    </subcellularLocation>
    <subcellularLocation>
        <location evidence="2">Cytoplasm</location>
        <location evidence="2">Perinuclear region</location>
    </subcellularLocation>
    <subcellularLocation>
        <location evidence="2">Nucleus</location>
    </subcellularLocation>
    <subcellularLocation>
        <location evidence="3">Perikaryon</location>
    </subcellularLocation>
    <subcellularLocation>
        <location evidence="3">Cell projection</location>
        <location evidence="3">Dendrite</location>
    </subcellularLocation>
    <text evidence="2 3">Recruited to the plasma membrane through interaction with KRT1 which binds to membrane-bound ITGB1. Also associated with the membrane in oncogene-transformed cells. PKC activation induces translocation from the perinuclear region to the cell periphery (By similarity). In the brain, detected mainly in cell bodies and dendrites with little expression in axonal fibers or nuclei (By similarity).</text>
</comment>
<comment type="similarity">
    <text evidence="4">Belongs to the WD repeat G protein beta family. Ribosomal protein RACK1 subfamily.</text>
</comment>
<name>RACK1_CHICK</name>
<gene>
    <name type="primary">RACK1</name>
    <name type="synonym">GNB2L1</name>
</gene>
<organism>
    <name type="scientific">Gallus gallus</name>
    <name type="common">Chicken</name>
    <dbReference type="NCBI Taxonomy" id="9031"/>
    <lineage>
        <taxon>Eukaryota</taxon>
        <taxon>Metazoa</taxon>
        <taxon>Chordata</taxon>
        <taxon>Craniata</taxon>
        <taxon>Vertebrata</taxon>
        <taxon>Euteleostomi</taxon>
        <taxon>Archelosauria</taxon>
        <taxon>Archosauria</taxon>
        <taxon>Dinosauria</taxon>
        <taxon>Saurischia</taxon>
        <taxon>Theropoda</taxon>
        <taxon>Coelurosauria</taxon>
        <taxon>Aves</taxon>
        <taxon>Neognathae</taxon>
        <taxon>Galloanserae</taxon>
        <taxon>Galliformes</taxon>
        <taxon>Phasianidae</taxon>
        <taxon>Phasianinae</taxon>
        <taxon>Gallus</taxon>
    </lineage>
</organism>
<proteinExistence type="evidence at protein level"/>